<accession>P41472</accession>
<sequence length="99" mass="11526">MNTSVDVVTKLIHLQNNVLDIMREVDQYLNSDTPDYTIESLNAPGKQFDFLDEMLTKKLIESNAIVFDEKSKNLKIIHNNINMCLNWCINLITIKHYVQ</sequence>
<reference key="1">
    <citation type="journal article" date="1994" name="Virology">
        <title>The complete DNA sequence of Autographa californica nuclear polyhedrosis virus.</title>
        <authorList>
            <person name="Ayres M.D."/>
            <person name="Howard S.C."/>
            <person name="Kuzio J."/>
            <person name="Lopez-Ferber M."/>
            <person name="Possee R.D."/>
        </authorList>
    </citation>
    <scope>NUCLEOTIDE SEQUENCE [LARGE SCALE GENOMIC DNA]</scope>
    <source>
        <strain>C6</strain>
    </source>
</reference>
<proteinExistence type="predicted"/>
<keyword id="KW-1185">Reference proteome</keyword>
<dbReference type="EMBL" id="L22858">
    <property type="protein sequence ID" value="AAA66703.1"/>
    <property type="molecule type" value="Genomic_DNA"/>
</dbReference>
<dbReference type="PIR" id="B72859">
    <property type="entry name" value="B72859"/>
</dbReference>
<dbReference type="RefSeq" id="NP_054103.1">
    <property type="nucleotide sequence ID" value="NC_001623.1"/>
</dbReference>
<dbReference type="SMR" id="P41472"/>
<dbReference type="GeneID" id="1403906"/>
<dbReference type="KEGG" id="vg:1403906"/>
<dbReference type="OrthoDB" id="20987at10239"/>
<dbReference type="Proteomes" id="UP000008292">
    <property type="component" value="Segment"/>
</dbReference>
<dbReference type="InterPro" id="IPR024322">
    <property type="entry name" value="DUF2682"/>
</dbReference>
<dbReference type="Pfam" id="PF10909">
    <property type="entry name" value="DUF2682"/>
    <property type="match status" value="1"/>
</dbReference>
<dbReference type="SUPFAM" id="SSF63491">
    <property type="entry name" value="BAG domain"/>
    <property type="match status" value="1"/>
</dbReference>
<name>Y073_NPVAC</name>
<organismHost>
    <name type="scientific">Lepidoptera</name>
    <name type="common">butterflies and moths</name>
    <dbReference type="NCBI Taxonomy" id="7088"/>
</organismHost>
<feature type="chain" id="PRO_0000133012" description="Uncharacterized 11.5 kDa protein in IAP2-VLF1 intergenic region">
    <location>
        <begin position="1"/>
        <end position="99"/>
    </location>
</feature>
<organism>
    <name type="scientific">Autographa californica nuclear polyhedrosis virus</name>
    <name type="common">AcMNPV</name>
    <dbReference type="NCBI Taxonomy" id="46015"/>
    <lineage>
        <taxon>Viruses</taxon>
        <taxon>Viruses incertae sedis</taxon>
        <taxon>Naldaviricetes</taxon>
        <taxon>Lefavirales</taxon>
        <taxon>Baculoviridae</taxon>
        <taxon>Alphabaculovirus</taxon>
        <taxon>Alphabaculovirus aucalifornicae</taxon>
    </lineage>
</organism>
<protein>
    <recommendedName>
        <fullName>Uncharacterized 11.5 kDa protein in IAP2-VLF1 intergenic region</fullName>
    </recommendedName>
</protein>